<gene>
    <name evidence="1" type="primary">rplF</name>
    <name type="ordered locus">A1C_05030</name>
</gene>
<keyword id="KW-0687">Ribonucleoprotein</keyword>
<keyword id="KW-0689">Ribosomal protein</keyword>
<keyword id="KW-0694">RNA-binding</keyword>
<keyword id="KW-0699">rRNA-binding</keyword>
<feature type="chain" id="PRO_1000055296" description="Large ribosomal subunit protein uL6">
    <location>
        <begin position="1"/>
        <end position="177"/>
    </location>
</feature>
<dbReference type="EMBL" id="CP000847">
    <property type="protein sequence ID" value="ABV75260.1"/>
    <property type="molecule type" value="Genomic_DNA"/>
</dbReference>
<dbReference type="RefSeq" id="WP_012149890.1">
    <property type="nucleotide sequence ID" value="NC_009881.1"/>
</dbReference>
<dbReference type="SMR" id="A8GPD5"/>
<dbReference type="STRING" id="293614.A1C_05030"/>
<dbReference type="KEGG" id="rak:A1C_05030"/>
<dbReference type="eggNOG" id="COG0097">
    <property type="taxonomic scope" value="Bacteria"/>
</dbReference>
<dbReference type="HOGENOM" id="CLU_065464_1_2_5"/>
<dbReference type="Proteomes" id="UP000006830">
    <property type="component" value="Chromosome"/>
</dbReference>
<dbReference type="GO" id="GO:1990904">
    <property type="term" value="C:ribonucleoprotein complex"/>
    <property type="evidence" value="ECO:0007669"/>
    <property type="project" value="UniProtKB-KW"/>
</dbReference>
<dbReference type="GO" id="GO:0005840">
    <property type="term" value="C:ribosome"/>
    <property type="evidence" value="ECO:0007669"/>
    <property type="project" value="UniProtKB-KW"/>
</dbReference>
<dbReference type="GO" id="GO:0019843">
    <property type="term" value="F:rRNA binding"/>
    <property type="evidence" value="ECO:0007669"/>
    <property type="project" value="UniProtKB-UniRule"/>
</dbReference>
<dbReference type="GO" id="GO:0003735">
    <property type="term" value="F:structural constituent of ribosome"/>
    <property type="evidence" value="ECO:0007669"/>
    <property type="project" value="InterPro"/>
</dbReference>
<dbReference type="GO" id="GO:0002181">
    <property type="term" value="P:cytoplasmic translation"/>
    <property type="evidence" value="ECO:0007669"/>
    <property type="project" value="TreeGrafter"/>
</dbReference>
<dbReference type="Gene3D" id="3.90.930.12">
    <property type="entry name" value="Ribosomal protein L6, alpha-beta domain"/>
    <property type="match status" value="2"/>
</dbReference>
<dbReference type="HAMAP" id="MF_01365_B">
    <property type="entry name" value="Ribosomal_uL6_B"/>
    <property type="match status" value="1"/>
</dbReference>
<dbReference type="InterPro" id="IPR000702">
    <property type="entry name" value="Ribosomal_uL6-like"/>
</dbReference>
<dbReference type="InterPro" id="IPR036789">
    <property type="entry name" value="Ribosomal_uL6-like_a/b-dom_sf"/>
</dbReference>
<dbReference type="InterPro" id="IPR020040">
    <property type="entry name" value="Ribosomal_uL6_a/b-dom"/>
</dbReference>
<dbReference type="InterPro" id="IPR019906">
    <property type="entry name" value="Ribosomal_uL6_bac-type"/>
</dbReference>
<dbReference type="InterPro" id="IPR002358">
    <property type="entry name" value="Ribosomal_uL6_CS"/>
</dbReference>
<dbReference type="NCBIfam" id="TIGR03654">
    <property type="entry name" value="L6_bact"/>
    <property type="match status" value="1"/>
</dbReference>
<dbReference type="PANTHER" id="PTHR11655">
    <property type="entry name" value="60S/50S RIBOSOMAL PROTEIN L6/L9"/>
    <property type="match status" value="1"/>
</dbReference>
<dbReference type="PANTHER" id="PTHR11655:SF14">
    <property type="entry name" value="LARGE RIBOSOMAL SUBUNIT PROTEIN UL6M"/>
    <property type="match status" value="1"/>
</dbReference>
<dbReference type="Pfam" id="PF00347">
    <property type="entry name" value="Ribosomal_L6"/>
    <property type="match status" value="2"/>
</dbReference>
<dbReference type="PIRSF" id="PIRSF002162">
    <property type="entry name" value="Ribosomal_L6"/>
    <property type="match status" value="1"/>
</dbReference>
<dbReference type="PRINTS" id="PR00059">
    <property type="entry name" value="RIBOSOMALL6"/>
</dbReference>
<dbReference type="SUPFAM" id="SSF56053">
    <property type="entry name" value="Ribosomal protein L6"/>
    <property type="match status" value="2"/>
</dbReference>
<dbReference type="PROSITE" id="PS00525">
    <property type="entry name" value="RIBOSOMAL_L6_1"/>
    <property type="match status" value="1"/>
</dbReference>
<proteinExistence type="inferred from homology"/>
<name>RL6_RICAH</name>
<comment type="function">
    <text evidence="1">This protein binds to the 23S rRNA, and is important in its secondary structure. It is located near the subunit interface in the base of the L7/L12 stalk, and near the tRNA binding site of the peptidyltransferase center.</text>
</comment>
<comment type="subunit">
    <text evidence="1">Part of the 50S ribosomal subunit.</text>
</comment>
<comment type="similarity">
    <text evidence="1">Belongs to the universal ribosomal protein uL6 family.</text>
</comment>
<accession>A8GPD5</accession>
<evidence type="ECO:0000255" key="1">
    <source>
        <dbReference type="HAMAP-Rule" id="MF_01365"/>
    </source>
</evidence>
<evidence type="ECO:0000305" key="2"/>
<reference key="1">
    <citation type="submission" date="2007-09" db="EMBL/GenBank/DDBJ databases">
        <title>Complete genome sequence of Rickettsia akari.</title>
        <authorList>
            <person name="Madan A."/>
            <person name="Fahey J."/>
            <person name="Helton E."/>
            <person name="Ketteman M."/>
            <person name="Madan A."/>
            <person name="Rodrigues S."/>
            <person name="Sanchez A."/>
            <person name="Whiting M."/>
            <person name="Dasch G."/>
            <person name="Eremeeva M."/>
        </authorList>
    </citation>
    <scope>NUCLEOTIDE SEQUENCE [LARGE SCALE GENOMIC DNA]</scope>
    <source>
        <strain>Hartford</strain>
    </source>
</reference>
<organism>
    <name type="scientific">Rickettsia akari (strain Hartford)</name>
    <dbReference type="NCBI Taxonomy" id="293614"/>
    <lineage>
        <taxon>Bacteria</taxon>
        <taxon>Pseudomonadati</taxon>
        <taxon>Pseudomonadota</taxon>
        <taxon>Alphaproteobacteria</taxon>
        <taxon>Rickettsiales</taxon>
        <taxon>Rickettsiaceae</taxon>
        <taxon>Rickettsieae</taxon>
        <taxon>Rickettsia</taxon>
        <taxon>spotted fever group</taxon>
    </lineage>
</organism>
<protein>
    <recommendedName>
        <fullName evidence="1">Large ribosomal subunit protein uL6</fullName>
    </recommendedName>
    <alternativeName>
        <fullName evidence="2">50S ribosomal protein L6</fullName>
    </alternativeName>
</protein>
<sequence>MSRVGKLPITIPEGVTVGLNDLEVKISGPKGELSKIFKGNIAISLAENKLLVKPLAANKSARAMWGTARSIISNMVIGVKEGFKLKLEINGVGYRAMVKGKYLNLMLAKSHNTKIEIPSHIKIDVPKQNIIILEGTDKEKLGQFASIIIKQRPPEPYKGKGIKFDNQFIPRKEGKKN</sequence>